<comment type="subcellular location">
    <subcellularLocation>
        <location evidence="6">Membrane</location>
        <topology evidence="6">Single-pass type IV membrane protein</topology>
    </subcellularLocation>
</comment>
<comment type="tissue specificity">
    <text evidence="5">Widely expressed at intermediate level.</text>
</comment>
<comment type="sequence caution" evidence="6">
    <conflict type="erroneous initiation">
        <sequence resource="EMBL-CDS" id="BAB13999"/>
    </conflict>
</comment>
<comment type="sequence caution" evidence="6">
    <conflict type="frameshift">
        <sequence resource="EMBL-CDS" id="BAB14036"/>
    </conflict>
</comment>
<comment type="sequence caution" evidence="6">
    <conflict type="miscellaneous discrepancy">
        <sequence resource="EMBL-CDS" id="BAB14036"/>
    </conflict>
    <text>Chimeric cDNA.</text>
</comment>
<reference key="1">
    <citation type="journal article" date="2001" name="Genomics">
        <title>Calmin, a protein with calponin homology and transmembrane domains expressed in maturing spermatogenic cells.</title>
        <authorList>
            <person name="Ishisaki Z."/>
            <person name="Takaishi M."/>
            <person name="Furuta I."/>
            <person name="Huh N.-H."/>
        </authorList>
    </citation>
    <scope>NUCLEOTIDE SEQUENCE [MRNA]</scope>
    <source>
        <tissue>Placenta</tissue>
    </source>
</reference>
<reference key="2">
    <citation type="journal article" date="2004" name="Nat. Genet.">
        <title>Complete sequencing and characterization of 21,243 full-length human cDNAs.</title>
        <authorList>
            <person name="Ota T."/>
            <person name="Suzuki Y."/>
            <person name="Nishikawa T."/>
            <person name="Otsuki T."/>
            <person name="Sugiyama T."/>
            <person name="Irie R."/>
            <person name="Wakamatsu A."/>
            <person name="Hayashi K."/>
            <person name="Sato H."/>
            <person name="Nagai K."/>
            <person name="Kimura K."/>
            <person name="Makita H."/>
            <person name="Sekine M."/>
            <person name="Obayashi M."/>
            <person name="Nishi T."/>
            <person name="Shibahara T."/>
            <person name="Tanaka T."/>
            <person name="Ishii S."/>
            <person name="Yamamoto J."/>
            <person name="Saito K."/>
            <person name="Kawai Y."/>
            <person name="Isono Y."/>
            <person name="Nakamura Y."/>
            <person name="Nagahari K."/>
            <person name="Murakami K."/>
            <person name="Yasuda T."/>
            <person name="Iwayanagi T."/>
            <person name="Wagatsuma M."/>
            <person name="Shiratori A."/>
            <person name="Sudo H."/>
            <person name="Hosoiri T."/>
            <person name="Kaku Y."/>
            <person name="Kodaira H."/>
            <person name="Kondo H."/>
            <person name="Sugawara M."/>
            <person name="Takahashi M."/>
            <person name="Kanda K."/>
            <person name="Yokoi T."/>
            <person name="Furuya T."/>
            <person name="Kikkawa E."/>
            <person name="Omura Y."/>
            <person name="Abe K."/>
            <person name="Kamihara K."/>
            <person name="Katsuta N."/>
            <person name="Sato K."/>
            <person name="Tanikawa M."/>
            <person name="Yamazaki M."/>
            <person name="Ninomiya K."/>
            <person name="Ishibashi T."/>
            <person name="Yamashita H."/>
            <person name="Murakawa K."/>
            <person name="Fujimori K."/>
            <person name="Tanai H."/>
            <person name="Kimata M."/>
            <person name="Watanabe M."/>
            <person name="Hiraoka S."/>
            <person name="Chiba Y."/>
            <person name="Ishida S."/>
            <person name="Ono Y."/>
            <person name="Takiguchi S."/>
            <person name="Watanabe S."/>
            <person name="Yosida M."/>
            <person name="Hotuta T."/>
            <person name="Kusano J."/>
            <person name="Kanehori K."/>
            <person name="Takahashi-Fujii A."/>
            <person name="Hara H."/>
            <person name="Tanase T.-O."/>
            <person name="Nomura Y."/>
            <person name="Togiya S."/>
            <person name="Komai F."/>
            <person name="Hara R."/>
            <person name="Takeuchi K."/>
            <person name="Arita M."/>
            <person name="Imose N."/>
            <person name="Musashino K."/>
            <person name="Yuuki H."/>
            <person name="Oshima A."/>
            <person name="Sasaki N."/>
            <person name="Aotsuka S."/>
            <person name="Yoshikawa Y."/>
            <person name="Matsunawa H."/>
            <person name="Ichihara T."/>
            <person name="Shiohata N."/>
            <person name="Sano S."/>
            <person name="Moriya S."/>
            <person name="Momiyama H."/>
            <person name="Satoh N."/>
            <person name="Takami S."/>
            <person name="Terashima Y."/>
            <person name="Suzuki O."/>
            <person name="Nakagawa S."/>
            <person name="Senoh A."/>
            <person name="Mizoguchi H."/>
            <person name="Goto Y."/>
            <person name="Shimizu F."/>
            <person name="Wakebe H."/>
            <person name="Hishigaki H."/>
            <person name="Watanabe T."/>
            <person name="Sugiyama A."/>
            <person name="Takemoto M."/>
            <person name="Kawakami B."/>
            <person name="Yamazaki M."/>
            <person name="Watanabe K."/>
            <person name="Kumagai A."/>
            <person name="Itakura S."/>
            <person name="Fukuzumi Y."/>
            <person name="Fujimori Y."/>
            <person name="Komiyama M."/>
            <person name="Tashiro H."/>
            <person name="Tanigami A."/>
            <person name="Fujiwara T."/>
            <person name="Ono T."/>
            <person name="Yamada K."/>
            <person name="Fujii Y."/>
            <person name="Ozaki K."/>
            <person name="Hirao M."/>
            <person name="Ohmori Y."/>
            <person name="Kawabata A."/>
            <person name="Hikiji T."/>
            <person name="Kobatake N."/>
            <person name="Inagaki H."/>
            <person name="Ikema Y."/>
            <person name="Okamoto S."/>
            <person name="Okitani R."/>
            <person name="Kawakami T."/>
            <person name="Noguchi S."/>
            <person name="Itoh T."/>
            <person name="Shigeta K."/>
            <person name="Senba T."/>
            <person name="Matsumura K."/>
            <person name="Nakajima Y."/>
            <person name="Mizuno T."/>
            <person name="Morinaga M."/>
            <person name="Sasaki M."/>
            <person name="Togashi T."/>
            <person name="Oyama M."/>
            <person name="Hata H."/>
            <person name="Watanabe M."/>
            <person name="Komatsu T."/>
            <person name="Mizushima-Sugano J."/>
            <person name="Satoh T."/>
            <person name="Shirai Y."/>
            <person name="Takahashi Y."/>
            <person name="Nakagawa K."/>
            <person name="Okumura K."/>
            <person name="Nagase T."/>
            <person name="Nomura N."/>
            <person name="Kikuchi H."/>
            <person name="Masuho Y."/>
            <person name="Yamashita R."/>
            <person name="Nakai K."/>
            <person name="Yada T."/>
            <person name="Nakamura Y."/>
            <person name="Ohara O."/>
            <person name="Isogai T."/>
            <person name="Sugano S."/>
        </authorList>
    </citation>
    <scope>NUCLEOTIDE SEQUENCE [LARGE SCALE MRNA]</scope>
    <source>
        <tissue>Colon</tissue>
        <tissue>Mammary gland</tissue>
        <tissue>Testis</tissue>
    </source>
</reference>
<reference key="3">
    <citation type="journal article" date="2003" name="Nature">
        <title>The DNA sequence and analysis of human chromosome 14.</title>
        <authorList>
            <person name="Heilig R."/>
            <person name="Eckenberg R."/>
            <person name="Petit J.-L."/>
            <person name="Fonknechten N."/>
            <person name="Da Silva C."/>
            <person name="Cattolico L."/>
            <person name="Levy M."/>
            <person name="Barbe V."/>
            <person name="De Berardinis V."/>
            <person name="Ureta-Vidal A."/>
            <person name="Pelletier E."/>
            <person name="Vico V."/>
            <person name="Anthouard V."/>
            <person name="Rowen L."/>
            <person name="Madan A."/>
            <person name="Qin S."/>
            <person name="Sun H."/>
            <person name="Du H."/>
            <person name="Pepin K."/>
            <person name="Artiguenave F."/>
            <person name="Robert C."/>
            <person name="Cruaud C."/>
            <person name="Bruels T."/>
            <person name="Jaillon O."/>
            <person name="Friedlander L."/>
            <person name="Samson G."/>
            <person name="Brottier P."/>
            <person name="Cure S."/>
            <person name="Segurens B."/>
            <person name="Aniere F."/>
            <person name="Samain S."/>
            <person name="Crespeau H."/>
            <person name="Abbasi N."/>
            <person name="Aiach N."/>
            <person name="Boscus D."/>
            <person name="Dickhoff R."/>
            <person name="Dors M."/>
            <person name="Dubois I."/>
            <person name="Friedman C."/>
            <person name="Gouyvenoux M."/>
            <person name="James R."/>
            <person name="Madan A."/>
            <person name="Mairey-Estrada B."/>
            <person name="Mangenot S."/>
            <person name="Martins N."/>
            <person name="Menard M."/>
            <person name="Oztas S."/>
            <person name="Ratcliffe A."/>
            <person name="Shaffer T."/>
            <person name="Trask B."/>
            <person name="Vacherie B."/>
            <person name="Bellemere C."/>
            <person name="Belser C."/>
            <person name="Besnard-Gonnet M."/>
            <person name="Bartol-Mavel D."/>
            <person name="Boutard M."/>
            <person name="Briez-Silla S."/>
            <person name="Combette S."/>
            <person name="Dufosse-Laurent V."/>
            <person name="Ferron C."/>
            <person name="Lechaplais C."/>
            <person name="Louesse C."/>
            <person name="Muselet D."/>
            <person name="Magdelenat G."/>
            <person name="Pateau E."/>
            <person name="Petit E."/>
            <person name="Sirvain-Trukniewicz P."/>
            <person name="Trybou A."/>
            <person name="Vega-Czarny N."/>
            <person name="Bataille E."/>
            <person name="Bluet E."/>
            <person name="Bordelais I."/>
            <person name="Dubois M."/>
            <person name="Dumont C."/>
            <person name="Guerin T."/>
            <person name="Haffray S."/>
            <person name="Hammadi R."/>
            <person name="Muanga J."/>
            <person name="Pellouin V."/>
            <person name="Robert D."/>
            <person name="Wunderle E."/>
            <person name="Gauguet G."/>
            <person name="Roy A."/>
            <person name="Sainte-Marthe L."/>
            <person name="Verdier J."/>
            <person name="Verdier-Discala C."/>
            <person name="Hillier L.W."/>
            <person name="Fulton L."/>
            <person name="McPherson J."/>
            <person name="Matsuda F."/>
            <person name="Wilson R."/>
            <person name="Scarpelli C."/>
            <person name="Gyapay G."/>
            <person name="Wincker P."/>
            <person name="Saurin W."/>
            <person name="Quetier F."/>
            <person name="Waterston R."/>
            <person name="Hood L."/>
            <person name="Weissenbach J."/>
        </authorList>
    </citation>
    <scope>NUCLEOTIDE SEQUENCE [LARGE SCALE GENOMIC DNA]</scope>
</reference>
<reference key="4">
    <citation type="submission" date="2005-07" db="EMBL/GenBank/DDBJ databases">
        <authorList>
            <person name="Mural R.J."/>
            <person name="Istrail S."/>
            <person name="Sutton G.G."/>
            <person name="Florea L."/>
            <person name="Halpern A.L."/>
            <person name="Mobarry C.M."/>
            <person name="Lippert R."/>
            <person name="Walenz B."/>
            <person name="Shatkay H."/>
            <person name="Dew I."/>
            <person name="Miller J.R."/>
            <person name="Flanigan M.J."/>
            <person name="Edwards N.J."/>
            <person name="Bolanos R."/>
            <person name="Fasulo D."/>
            <person name="Halldorsson B.V."/>
            <person name="Hannenhalli S."/>
            <person name="Turner R."/>
            <person name="Yooseph S."/>
            <person name="Lu F."/>
            <person name="Nusskern D.R."/>
            <person name="Shue B.C."/>
            <person name="Zheng X.H."/>
            <person name="Zhong F."/>
            <person name="Delcher A.L."/>
            <person name="Huson D.H."/>
            <person name="Kravitz S.A."/>
            <person name="Mouchard L."/>
            <person name="Reinert K."/>
            <person name="Remington K.A."/>
            <person name="Clark A.G."/>
            <person name="Waterman M.S."/>
            <person name="Eichler E.E."/>
            <person name="Adams M.D."/>
            <person name="Hunkapiller M.W."/>
            <person name="Myers E.W."/>
            <person name="Venter J.C."/>
        </authorList>
    </citation>
    <scope>NUCLEOTIDE SEQUENCE [LARGE SCALE GENOMIC DNA]</scope>
</reference>
<reference key="5">
    <citation type="journal article" date="2007" name="BMC Genomics">
        <title>The full-ORF clone resource of the German cDNA consortium.</title>
        <authorList>
            <person name="Bechtel S."/>
            <person name="Rosenfelder H."/>
            <person name="Duda A."/>
            <person name="Schmidt C.P."/>
            <person name="Ernst U."/>
            <person name="Wellenreuther R."/>
            <person name="Mehrle A."/>
            <person name="Schuster C."/>
            <person name="Bahr A."/>
            <person name="Bloecker H."/>
            <person name="Heubner D."/>
            <person name="Hoerlein A."/>
            <person name="Michel G."/>
            <person name="Wedler H."/>
            <person name="Koehrer K."/>
            <person name="Ottenwaelder B."/>
            <person name="Poustka A."/>
            <person name="Wiemann S."/>
            <person name="Schupp I."/>
        </authorList>
    </citation>
    <scope>NUCLEOTIDE SEQUENCE [LARGE SCALE MRNA] OF 12-865</scope>
    <source>
        <tissue>Testis</tissue>
    </source>
</reference>
<reference key="6">
    <citation type="journal article" date="1999" name="DNA Res.">
        <title>Characterization of cDNA clones selected by the GeneMark analysis from size-fractionated cDNA libraries from human brain.</title>
        <authorList>
            <person name="Hirosawa M."/>
            <person name="Nagase T."/>
            <person name="Ishikawa K."/>
            <person name="Kikuno R."/>
            <person name="Nomura N."/>
            <person name="Ohara O."/>
        </authorList>
    </citation>
    <scope>NUCLEOTIDE SEQUENCE [LARGE SCALE MRNA] OF 524-862</scope>
    <scope>TISSUE SPECIFICITY</scope>
    <source>
        <tissue>Brain</tissue>
    </source>
</reference>
<reference key="7">
    <citation type="journal article" date="2008" name="Proc. Natl. Acad. Sci. U.S.A.">
        <title>A quantitative atlas of mitotic phosphorylation.</title>
        <authorList>
            <person name="Dephoure N."/>
            <person name="Zhou C."/>
            <person name="Villen J."/>
            <person name="Beausoleil S.A."/>
            <person name="Bakalarski C.E."/>
            <person name="Elledge S.J."/>
            <person name="Gygi S.P."/>
        </authorList>
    </citation>
    <scope>PHOSPHORYLATION [LARGE SCALE ANALYSIS] AT SER-402</scope>
    <scope>IDENTIFICATION BY MASS SPECTROMETRY [LARGE SCALE ANALYSIS]</scope>
    <source>
        <tissue>Cervix carcinoma</tissue>
    </source>
</reference>
<reference key="8">
    <citation type="journal article" date="2009" name="Sci. Signal.">
        <title>Quantitative phosphoproteomic analysis of T cell receptor signaling reveals system-wide modulation of protein-protein interactions.</title>
        <authorList>
            <person name="Mayya V."/>
            <person name="Lundgren D.H."/>
            <person name="Hwang S.-I."/>
            <person name="Rezaul K."/>
            <person name="Wu L."/>
            <person name="Eng J.K."/>
            <person name="Rodionov V."/>
            <person name="Han D.K."/>
        </authorList>
    </citation>
    <scope>IDENTIFICATION BY MASS SPECTROMETRY [LARGE SCALE ANALYSIS]</scope>
    <source>
        <tissue>Leukemic T-cell</tissue>
    </source>
</reference>
<reference key="9">
    <citation type="journal article" date="2014" name="J. Proteomics">
        <title>An enzyme assisted RP-RPLC approach for in-depth analysis of human liver phosphoproteome.</title>
        <authorList>
            <person name="Bian Y."/>
            <person name="Song C."/>
            <person name="Cheng K."/>
            <person name="Dong M."/>
            <person name="Wang F."/>
            <person name="Huang J."/>
            <person name="Sun D."/>
            <person name="Wang L."/>
            <person name="Ye M."/>
            <person name="Zou H."/>
        </authorList>
    </citation>
    <scope>PHOSPHORYLATION [LARGE SCALE ANALYSIS] AT SER-301; SER-619; THR-699; SER-713; SER-769; SER-838 AND SER-841</scope>
    <scope>IDENTIFICATION BY MASS SPECTROMETRY [LARGE SCALE ANALYSIS]</scope>
    <source>
        <tissue>Liver</tissue>
    </source>
</reference>
<proteinExistence type="evidence at protein level"/>
<keyword id="KW-0009">Actin-binding</keyword>
<keyword id="KW-0472">Membrane</keyword>
<keyword id="KW-0597">Phosphoprotein</keyword>
<keyword id="KW-1267">Proteomics identification</keyword>
<keyword id="KW-1185">Reference proteome</keyword>
<keyword id="KW-0677">Repeat</keyword>
<keyword id="KW-0812">Transmembrane</keyword>
<keyword id="KW-1133">Transmembrane helix</keyword>
<protein>
    <recommendedName>
        <fullName>Calmin</fullName>
    </recommendedName>
    <alternativeName>
        <fullName>Calponin-like transmembrane domain protein</fullName>
    </alternativeName>
</protein>
<evidence type="ECO:0000250" key="1">
    <source>
        <dbReference type="UniProtKB" id="Q8C5W0"/>
    </source>
</evidence>
<evidence type="ECO:0000255" key="2"/>
<evidence type="ECO:0000255" key="3">
    <source>
        <dbReference type="PROSITE-ProRule" id="PRU00044"/>
    </source>
</evidence>
<evidence type="ECO:0000256" key="4">
    <source>
        <dbReference type="SAM" id="MobiDB-lite"/>
    </source>
</evidence>
<evidence type="ECO:0000269" key="5">
    <source>
    </source>
</evidence>
<evidence type="ECO:0000305" key="6"/>
<evidence type="ECO:0007744" key="7">
    <source>
    </source>
</evidence>
<evidence type="ECO:0007744" key="8">
    <source>
    </source>
</evidence>
<gene>
    <name type="primary">CLMN</name>
    <name type="synonym">KIAA1188</name>
</gene>
<dbReference type="EMBL" id="AB047979">
    <property type="protein sequence ID" value="BAB59010.1"/>
    <property type="molecule type" value="mRNA"/>
</dbReference>
<dbReference type="EMBL" id="AK022279">
    <property type="protein sequence ID" value="BAB13999.1"/>
    <property type="status" value="ALT_INIT"/>
    <property type="molecule type" value="mRNA"/>
</dbReference>
<dbReference type="EMBL" id="AK022445">
    <property type="protein sequence ID" value="BAB14036.1"/>
    <property type="status" value="ALT_SEQ"/>
    <property type="molecule type" value="mRNA"/>
</dbReference>
<dbReference type="EMBL" id="AK025226">
    <property type="protein sequence ID" value="BAB15087.1"/>
    <property type="molecule type" value="mRNA"/>
</dbReference>
<dbReference type="EMBL" id="CH471061">
    <property type="protein sequence ID" value="EAW81598.1"/>
    <property type="molecule type" value="Genomic_DNA"/>
</dbReference>
<dbReference type="EMBL" id="AK314315">
    <property type="protein sequence ID" value="BAG36964.1"/>
    <property type="molecule type" value="mRNA"/>
</dbReference>
<dbReference type="EMBL" id="AL117187">
    <property type="status" value="NOT_ANNOTATED_CDS"/>
    <property type="molecule type" value="Genomic_DNA"/>
</dbReference>
<dbReference type="EMBL" id="AL117526">
    <property type="protein sequence ID" value="CAB55978.1"/>
    <property type="molecule type" value="mRNA"/>
</dbReference>
<dbReference type="EMBL" id="AB033014">
    <property type="protein sequence ID" value="BAA86502.1"/>
    <property type="molecule type" value="mRNA"/>
</dbReference>
<dbReference type="CCDS" id="CCDS9933.1"/>
<dbReference type="PIR" id="T17288">
    <property type="entry name" value="T17288"/>
</dbReference>
<dbReference type="RefSeq" id="NP_079010.2">
    <property type="nucleotide sequence ID" value="NM_024734.3"/>
</dbReference>
<dbReference type="SMR" id="Q96JQ2"/>
<dbReference type="BioGRID" id="122889">
    <property type="interactions" value="74"/>
</dbReference>
<dbReference type="FunCoup" id="Q96JQ2">
    <property type="interactions" value="75"/>
</dbReference>
<dbReference type="IntAct" id="Q96JQ2">
    <property type="interactions" value="24"/>
</dbReference>
<dbReference type="MINT" id="Q96JQ2"/>
<dbReference type="STRING" id="9606.ENSP00000298912"/>
<dbReference type="GlyGen" id="Q96JQ2">
    <property type="glycosylation" value="4 sites, 1 O-linked glycan (1 site)"/>
</dbReference>
<dbReference type="iPTMnet" id="Q96JQ2"/>
<dbReference type="PhosphoSitePlus" id="Q96JQ2"/>
<dbReference type="BioMuta" id="CLMN"/>
<dbReference type="DMDM" id="32699597"/>
<dbReference type="jPOST" id="Q96JQ2"/>
<dbReference type="MassIVE" id="Q96JQ2"/>
<dbReference type="PaxDb" id="9606-ENSP00000298912"/>
<dbReference type="PeptideAtlas" id="Q96JQ2"/>
<dbReference type="ProteomicsDB" id="77004"/>
<dbReference type="Pumba" id="Q96JQ2"/>
<dbReference type="Antibodypedia" id="1167">
    <property type="antibodies" value="51 antibodies from 14 providers"/>
</dbReference>
<dbReference type="DNASU" id="79789"/>
<dbReference type="Ensembl" id="ENST00000298912.9">
    <property type="protein sequence ID" value="ENSP00000298912.3"/>
    <property type="gene ID" value="ENSG00000165959.12"/>
</dbReference>
<dbReference type="GeneID" id="79789"/>
<dbReference type="KEGG" id="hsa:79789"/>
<dbReference type="MANE-Select" id="ENST00000298912.9">
    <property type="protein sequence ID" value="ENSP00000298912.3"/>
    <property type="RefSeq nucleotide sequence ID" value="NM_024734.4"/>
    <property type="RefSeq protein sequence ID" value="NP_079010.2"/>
</dbReference>
<dbReference type="UCSC" id="uc001yef.3">
    <property type="organism name" value="human"/>
</dbReference>
<dbReference type="AGR" id="HGNC:19972"/>
<dbReference type="CTD" id="79789"/>
<dbReference type="DisGeNET" id="79789"/>
<dbReference type="GeneCards" id="CLMN"/>
<dbReference type="HGNC" id="HGNC:19972">
    <property type="gene designation" value="CLMN"/>
</dbReference>
<dbReference type="HPA" id="ENSG00000165959">
    <property type="expression patterns" value="Tissue enhanced (testis)"/>
</dbReference>
<dbReference type="MIM" id="611121">
    <property type="type" value="gene"/>
</dbReference>
<dbReference type="neXtProt" id="NX_Q96JQ2"/>
<dbReference type="OpenTargets" id="ENSG00000165959"/>
<dbReference type="PharmGKB" id="PA134945356"/>
<dbReference type="VEuPathDB" id="HostDB:ENSG00000165959"/>
<dbReference type="eggNOG" id="KOG0516">
    <property type="taxonomic scope" value="Eukaryota"/>
</dbReference>
<dbReference type="GeneTree" id="ENSGT00940000159056"/>
<dbReference type="HOGENOM" id="CLU_014038_0_0_1"/>
<dbReference type="InParanoid" id="Q96JQ2"/>
<dbReference type="OMA" id="PHELFYY"/>
<dbReference type="OrthoDB" id="10017054at2759"/>
<dbReference type="PAN-GO" id="Q96JQ2">
    <property type="GO annotations" value="6 GO annotations based on evolutionary models"/>
</dbReference>
<dbReference type="PhylomeDB" id="Q96JQ2"/>
<dbReference type="TreeFam" id="TF317709"/>
<dbReference type="PathwayCommons" id="Q96JQ2"/>
<dbReference type="SignaLink" id="Q96JQ2"/>
<dbReference type="BioGRID-ORCS" id="79789">
    <property type="hits" value="12 hits in 1139 CRISPR screens"/>
</dbReference>
<dbReference type="ChiTaRS" id="CLMN">
    <property type="organism name" value="human"/>
</dbReference>
<dbReference type="GenomeRNAi" id="79789"/>
<dbReference type="Pharos" id="Q96JQ2">
    <property type="development level" value="Tbio"/>
</dbReference>
<dbReference type="PRO" id="PR:Q96JQ2"/>
<dbReference type="Proteomes" id="UP000005640">
    <property type="component" value="Chromosome 14"/>
</dbReference>
<dbReference type="RNAct" id="Q96JQ2">
    <property type="molecule type" value="protein"/>
</dbReference>
<dbReference type="Bgee" id="ENSG00000165959">
    <property type="expression patterns" value="Expressed in sperm and 187 other cell types or tissues"/>
</dbReference>
<dbReference type="ExpressionAtlas" id="Q96JQ2">
    <property type="expression patterns" value="baseline and differential"/>
</dbReference>
<dbReference type="GO" id="GO:0005737">
    <property type="term" value="C:cytoplasm"/>
    <property type="evidence" value="ECO:0000318"/>
    <property type="project" value="GO_Central"/>
</dbReference>
<dbReference type="GO" id="GO:0034993">
    <property type="term" value="C:meiotic nuclear membrane microtubule tethering complex"/>
    <property type="evidence" value="ECO:0000318"/>
    <property type="project" value="GO_Central"/>
</dbReference>
<dbReference type="GO" id="GO:0005640">
    <property type="term" value="C:nuclear outer membrane"/>
    <property type="evidence" value="ECO:0000318"/>
    <property type="project" value="GO_Central"/>
</dbReference>
<dbReference type="GO" id="GO:0051015">
    <property type="term" value="F:actin filament binding"/>
    <property type="evidence" value="ECO:0000318"/>
    <property type="project" value="GO_Central"/>
</dbReference>
<dbReference type="GO" id="GO:0008285">
    <property type="term" value="P:negative regulation of cell population proliferation"/>
    <property type="evidence" value="ECO:0000318"/>
    <property type="project" value="GO_Central"/>
</dbReference>
<dbReference type="GO" id="GO:0031175">
    <property type="term" value="P:neuron projection development"/>
    <property type="evidence" value="ECO:0007669"/>
    <property type="project" value="Ensembl"/>
</dbReference>
<dbReference type="CDD" id="cd21191">
    <property type="entry name" value="CH_CLMN_rpt1"/>
    <property type="match status" value="1"/>
</dbReference>
<dbReference type="CDD" id="cd21245">
    <property type="entry name" value="CH_CLMN_rpt2"/>
    <property type="match status" value="1"/>
</dbReference>
<dbReference type="FunFam" id="1.10.418.10:FF:000057">
    <property type="entry name" value="Calmin"/>
    <property type="match status" value="1"/>
</dbReference>
<dbReference type="FunFam" id="1.10.418.10:FF:000063">
    <property type="entry name" value="Calmin"/>
    <property type="match status" value="1"/>
</dbReference>
<dbReference type="Gene3D" id="1.10.418.10">
    <property type="entry name" value="Calponin-like domain"/>
    <property type="match status" value="2"/>
</dbReference>
<dbReference type="InterPro" id="IPR001589">
    <property type="entry name" value="Actinin_actin-bd_CS"/>
</dbReference>
<dbReference type="InterPro" id="IPR001715">
    <property type="entry name" value="CH_dom"/>
</dbReference>
<dbReference type="InterPro" id="IPR036872">
    <property type="entry name" value="CH_dom_sf"/>
</dbReference>
<dbReference type="InterPro" id="IPR047827">
    <property type="entry name" value="CLMN_CH_first"/>
</dbReference>
<dbReference type="InterPro" id="IPR047826">
    <property type="entry name" value="CLMN_CH_second"/>
</dbReference>
<dbReference type="InterPro" id="IPR052403">
    <property type="entry name" value="LINC-complex_assoc"/>
</dbReference>
<dbReference type="PANTHER" id="PTHR47535:SF7">
    <property type="entry name" value="CALMIN"/>
    <property type="match status" value="1"/>
</dbReference>
<dbReference type="PANTHER" id="PTHR47535">
    <property type="entry name" value="MUSCLE-SPECIFIC PROTEIN 300 KDA, ISOFORM G"/>
    <property type="match status" value="1"/>
</dbReference>
<dbReference type="Pfam" id="PF00307">
    <property type="entry name" value="CH"/>
    <property type="match status" value="2"/>
</dbReference>
<dbReference type="SMART" id="SM00033">
    <property type="entry name" value="CH"/>
    <property type="match status" value="2"/>
</dbReference>
<dbReference type="SUPFAM" id="SSF47576">
    <property type="entry name" value="Calponin-homology domain, CH-domain"/>
    <property type="match status" value="1"/>
</dbReference>
<dbReference type="PROSITE" id="PS00019">
    <property type="entry name" value="ACTININ_1"/>
    <property type="match status" value="1"/>
</dbReference>
<dbReference type="PROSITE" id="PS00020">
    <property type="entry name" value="ACTININ_2"/>
    <property type="match status" value="1"/>
</dbReference>
<dbReference type="PROSITE" id="PS50021">
    <property type="entry name" value="CH"/>
    <property type="match status" value="2"/>
</dbReference>
<sequence length="1002" mass="111651">MAAHEWDWFQREELIGQISDIRVQNLQVERENVQKRTFTRWINLHLEKCNPPLEVKDLFVDIQDGKILMALLEVLSGRNLLHEYKSSSHRIFRLNNIAKALKFLEDSNVKLVSIDAAEIADGNPSLVLGLIWNIILFFQIKELTGNLSRNSPSSSLSPGSGGTDSDSSFPPTPTAERSVAISVKDQRKAIKALLAWVQRKTRKYGVAVQDFAGSWRSGLAFLAVIKAIDPSLVDMKQALENSTRENLEKAFSIAQDALHIPRLLEPEDIMVDTPDEQSIMTYVAQFLERFPELEAEDIFDSDKEVPIESTFVRIKETPSEQESKVFVLTENGERTYTVNHETSHPPPSKVFVCDKPESMKEFRLDGVSSHALSDSSTEFMHQIIDQVLQGGPGKTSDISEPSPESSILSSRKENGRSNSLPIKKTVHFEADTYKDPFCSKNLSLCFEGSPRVAKESLRQDGHVLAVEVAEEKEQKQESSKIPESSSDKVAGDIFLVEGTNNNSQSSSCNGALESTARHDEESHSLSPPGENTVMADSFQIKVNLMTVEALEEGDYFEAIPLKASKFNSDLIDFASTSQAFNKVPSPHETKPDEDAEAFENHAEKLGKRSIKSAHKKKDSPEPQVKMDKHEPHQDSGEEAEGCPSAPEETPVDKKPEVHEKAKRKSTRPHYEEEGEDDDLQGVGEELSSSPPSSCVSLETLGSHSEEGLDFKPSPPLSKVSVIPHDLFYFPHYEVPLAAVLEAYVEDPEDLKNEEMDLEEPEGYMPDLDSREEEADGSQSSSSSSVPGESLPSASDQVLYLSRGGVGTTPASEPAPLAPHEDHQQRETKENDPMDSHQSQESPNLENIANPLEENVTKESISSKKKEKRKHVDHVESSLFVAPGSVQSSDDLEEDSSDYSIPSRTSHSDSSIYLRRHTHRSSESDHFSYVQLRNAADLDDRRNRILTRKANSSGEAMSLGSHSPQSDSLTQLVQQPDMMYFILFLWLLVYCLLLFPQLDVSRL</sequence>
<accession>Q96JQ2</accession>
<accession>B2RAR7</accession>
<accession>Q9H713</accession>
<accession>Q9HA23</accession>
<accession>Q9HA57</accession>
<accession>Q9UFP4</accession>
<accession>Q9ULN2</accession>
<feature type="chain" id="PRO_0000089854" description="Calmin">
    <location>
        <begin position="1"/>
        <end position="1002"/>
    </location>
</feature>
<feature type="transmembrane region" description="Helical; Anchor for type IV membrane protein" evidence="2">
    <location>
        <begin position="977"/>
        <end position="997"/>
    </location>
</feature>
<feature type="domain" description="Calponin-homology (CH) 1" evidence="3">
    <location>
        <begin position="32"/>
        <end position="139"/>
    </location>
</feature>
<feature type="domain" description="Calponin-homology (CH) 2" evidence="3">
    <location>
        <begin position="187"/>
        <end position="291"/>
    </location>
</feature>
<feature type="region of interest" description="Actin-binding">
    <location>
        <begin position="1"/>
        <end position="288"/>
    </location>
</feature>
<feature type="region of interest" description="Disordered" evidence="4">
    <location>
        <begin position="149"/>
        <end position="180"/>
    </location>
</feature>
<feature type="region of interest" description="Disordered" evidence="4">
    <location>
        <begin position="389"/>
        <end position="418"/>
    </location>
</feature>
<feature type="region of interest" description="Disordered" evidence="4">
    <location>
        <begin position="500"/>
        <end position="532"/>
    </location>
</feature>
<feature type="region of interest" description="Disordered" evidence="4">
    <location>
        <begin position="581"/>
        <end position="716"/>
    </location>
</feature>
<feature type="region of interest" description="Disordered" evidence="4">
    <location>
        <begin position="749"/>
        <end position="911"/>
    </location>
</feature>
<feature type="compositionally biased region" description="Low complexity" evidence="4">
    <location>
        <begin position="149"/>
        <end position="168"/>
    </location>
</feature>
<feature type="compositionally biased region" description="Low complexity" evidence="4">
    <location>
        <begin position="396"/>
        <end position="409"/>
    </location>
</feature>
<feature type="compositionally biased region" description="Polar residues" evidence="4">
    <location>
        <begin position="500"/>
        <end position="509"/>
    </location>
</feature>
<feature type="compositionally biased region" description="Basic and acidic residues" evidence="4">
    <location>
        <begin position="585"/>
        <end position="606"/>
    </location>
</feature>
<feature type="compositionally biased region" description="Basic residues" evidence="4">
    <location>
        <begin position="607"/>
        <end position="617"/>
    </location>
</feature>
<feature type="compositionally biased region" description="Basic and acidic residues" evidence="4">
    <location>
        <begin position="618"/>
        <end position="635"/>
    </location>
</feature>
<feature type="compositionally biased region" description="Basic and acidic residues" evidence="4">
    <location>
        <begin position="650"/>
        <end position="659"/>
    </location>
</feature>
<feature type="compositionally biased region" description="Low complexity" evidence="4">
    <location>
        <begin position="681"/>
        <end position="697"/>
    </location>
</feature>
<feature type="compositionally biased region" description="Low complexity" evidence="4">
    <location>
        <begin position="776"/>
        <end position="794"/>
    </location>
</feature>
<feature type="compositionally biased region" description="Basic and acidic residues" evidence="4">
    <location>
        <begin position="818"/>
        <end position="834"/>
    </location>
</feature>
<feature type="compositionally biased region" description="Polar residues" evidence="4">
    <location>
        <begin position="835"/>
        <end position="846"/>
    </location>
</feature>
<feature type="compositionally biased region" description="Basic and acidic residues" evidence="4">
    <location>
        <begin position="854"/>
        <end position="863"/>
    </location>
</feature>
<feature type="compositionally biased region" description="Polar residues" evidence="4">
    <location>
        <begin position="898"/>
        <end position="910"/>
    </location>
</feature>
<feature type="modified residue" description="Phosphoserine" evidence="8">
    <location>
        <position position="301"/>
    </location>
</feature>
<feature type="modified residue" description="Phosphoserine" evidence="7">
    <location>
        <position position="402"/>
    </location>
</feature>
<feature type="modified residue" description="Phosphoserine" evidence="8">
    <location>
        <position position="619"/>
    </location>
</feature>
<feature type="modified residue" description="Phosphothreonine" evidence="8">
    <location>
        <position position="699"/>
    </location>
</feature>
<feature type="modified residue" description="Phosphoserine" evidence="8">
    <location>
        <position position="713"/>
    </location>
</feature>
<feature type="modified residue" description="Phosphoserine" evidence="8">
    <location>
        <position position="769"/>
    </location>
</feature>
<feature type="modified residue" description="Phosphoserine" evidence="8">
    <location>
        <position position="838"/>
    </location>
</feature>
<feature type="modified residue" description="Phosphoserine" evidence="8">
    <location>
        <position position="841"/>
    </location>
</feature>
<feature type="modified residue" description="Phosphoserine" evidence="1">
    <location>
        <position position="907"/>
    </location>
</feature>
<feature type="sequence variant" id="VAR_050866" description="In dbSNP:rs10149705.">
    <original>P</original>
    <variation>L</variation>
    <location>
        <position position="963"/>
    </location>
</feature>
<feature type="sequence conflict" description="In Ref. 2; BAB13999." evidence="6" ref="2">
    <original>A</original>
    <variation>V</variation>
    <location>
        <position position="661"/>
    </location>
</feature>
<feature type="sequence conflict" description="In Ref. 2; BAB15087." evidence="6" ref="2">
    <original>EKR</original>
    <variation>KKK</variation>
    <location>
        <begin position="866"/>
        <end position="868"/>
    </location>
</feature>
<organism>
    <name type="scientific">Homo sapiens</name>
    <name type="common">Human</name>
    <dbReference type="NCBI Taxonomy" id="9606"/>
    <lineage>
        <taxon>Eukaryota</taxon>
        <taxon>Metazoa</taxon>
        <taxon>Chordata</taxon>
        <taxon>Craniata</taxon>
        <taxon>Vertebrata</taxon>
        <taxon>Euteleostomi</taxon>
        <taxon>Mammalia</taxon>
        <taxon>Eutheria</taxon>
        <taxon>Euarchontoglires</taxon>
        <taxon>Primates</taxon>
        <taxon>Haplorrhini</taxon>
        <taxon>Catarrhini</taxon>
        <taxon>Hominidae</taxon>
        <taxon>Homo</taxon>
    </lineage>
</organism>
<name>CLMN_HUMAN</name>